<proteinExistence type="inferred from homology"/>
<gene>
    <name evidence="1" type="primary">tam</name>
    <name type="ordered locus">YPTS_2640</name>
</gene>
<comment type="function">
    <text evidence="1">Catalyzes the S-adenosylmethionine monomethyl esterification of trans-aconitate.</text>
</comment>
<comment type="catalytic activity">
    <reaction evidence="1">
        <text>trans-aconitate + S-adenosyl-L-methionine = (E)-3-(methoxycarbonyl)pent-2-enedioate + S-adenosyl-L-homocysteine</text>
        <dbReference type="Rhea" id="RHEA:14969"/>
        <dbReference type="ChEBI" id="CHEBI:15708"/>
        <dbReference type="ChEBI" id="CHEBI:57470"/>
        <dbReference type="ChEBI" id="CHEBI:57856"/>
        <dbReference type="ChEBI" id="CHEBI:59789"/>
        <dbReference type="EC" id="2.1.1.144"/>
    </reaction>
</comment>
<comment type="subcellular location">
    <subcellularLocation>
        <location evidence="1">Cytoplasm</location>
    </subcellularLocation>
</comment>
<comment type="similarity">
    <text evidence="1">Belongs to the methyltransferase superfamily. Tam family.</text>
</comment>
<feature type="chain" id="PRO_1000129267" description="Trans-aconitate 2-methyltransferase">
    <location>
        <begin position="1"/>
        <end position="258"/>
    </location>
</feature>
<reference key="1">
    <citation type="submission" date="2008-04" db="EMBL/GenBank/DDBJ databases">
        <title>Complete sequence of Yersinia pseudotuberculosis PB1/+.</title>
        <authorList>
            <person name="Copeland A."/>
            <person name="Lucas S."/>
            <person name="Lapidus A."/>
            <person name="Glavina del Rio T."/>
            <person name="Dalin E."/>
            <person name="Tice H."/>
            <person name="Bruce D."/>
            <person name="Goodwin L."/>
            <person name="Pitluck S."/>
            <person name="Munk A.C."/>
            <person name="Brettin T."/>
            <person name="Detter J.C."/>
            <person name="Han C."/>
            <person name="Tapia R."/>
            <person name="Schmutz J."/>
            <person name="Larimer F."/>
            <person name="Land M."/>
            <person name="Hauser L."/>
            <person name="Challacombe J.F."/>
            <person name="Green L."/>
            <person name="Lindler L.E."/>
            <person name="Nikolich M.P."/>
            <person name="Richardson P."/>
        </authorList>
    </citation>
    <scope>NUCLEOTIDE SEQUENCE [LARGE SCALE GENOMIC DNA]</scope>
    <source>
        <strain>PB1/+</strain>
    </source>
</reference>
<evidence type="ECO:0000255" key="1">
    <source>
        <dbReference type="HAMAP-Rule" id="MF_00560"/>
    </source>
</evidence>
<protein>
    <recommendedName>
        <fullName evidence="1">Trans-aconitate 2-methyltransferase</fullName>
        <ecNumber evidence="1">2.1.1.144</ecNumber>
    </recommendedName>
</protein>
<organism>
    <name type="scientific">Yersinia pseudotuberculosis serotype IB (strain PB1/+)</name>
    <dbReference type="NCBI Taxonomy" id="502801"/>
    <lineage>
        <taxon>Bacteria</taxon>
        <taxon>Pseudomonadati</taxon>
        <taxon>Pseudomonadota</taxon>
        <taxon>Gammaproteobacteria</taxon>
        <taxon>Enterobacterales</taxon>
        <taxon>Yersiniaceae</taxon>
        <taxon>Yersinia</taxon>
    </lineage>
</organism>
<sequence length="258" mass="29353">MQDWDPDLYRQFEAERTRPATDLLAHITITSPQFISDLGCGPGNSTELLHRRFPDAQLVGIDHSQAMLASAQQRLPHCTFIEADIHQWRPSQPQNLIYANASLQWLTDHPHLFPSLLSQLAPRGVLAVQMPDNLDQPSHRAMREVAENGPWQQTLQEAGATRAKVLSANHYYDLLAPHAERVDIWRTTYYHPMPSAQAIVDWLRATGLRPYLAPLTEAMQLAFLQNYLAIIDKAYPARTDGRRLLAFPRLFIVAHAQR</sequence>
<keyword id="KW-0963">Cytoplasm</keyword>
<keyword id="KW-0489">Methyltransferase</keyword>
<keyword id="KW-0949">S-adenosyl-L-methionine</keyword>
<keyword id="KW-0808">Transferase</keyword>
<name>TAM_YERPB</name>
<dbReference type="EC" id="2.1.1.144" evidence="1"/>
<dbReference type="EMBL" id="CP001048">
    <property type="protein sequence ID" value="ACC89600.1"/>
    <property type="molecule type" value="Genomic_DNA"/>
</dbReference>
<dbReference type="RefSeq" id="WP_002210232.1">
    <property type="nucleotide sequence ID" value="NZ_CP009780.1"/>
</dbReference>
<dbReference type="SMR" id="B2K7X9"/>
<dbReference type="GeneID" id="57976176"/>
<dbReference type="KEGG" id="ypb:YPTS_2640"/>
<dbReference type="PATRIC" id="fig|502801.10.peg.2054"/>
<dbReference type="GO" id="GO:0005737">
    <property type="term" value="C:cytoplasm"/>
    <property type="evidence" value="ECO:0007669"/>
    <property type="project" value="UniProtKB-SubCell"/>
</dbReference>
<dbReference type="GO" id="GO:0030798">
    <property type="term" value="F:trans-aconitate 2-methyltransferase activity"/>
    <property type="evidence" value="ECO:0007669"/>
    <property type="project" value="UniProtKB-UniRule"/>
</dbReference>
<dbReference type="GO" id="GO:0032259">
    <property type="term" value="P:methylation"/>
    <property type="evidence" value="ECO:0007669"/>
    <property type="project" value="UniProtKB-KW"/>
</dbReference>
<dbReference type="CDD" id="cd02440">
    <property type="entry name" value="AdoMet_MTases"/>
    <property type="match status" value="1"/>
</dbReference>
<dbReference type="Gene3D" id="1.10.150.290">
    <property type="entry name" value="S-adenosyl-L-methionine-dependent methyltransferases"/>
    <property type="match status" value="1"/>
</dbReference>
<dbReference type="Gene3D" id="3.40.50.150">
    <property type="entry name" value="Vaccinia Virus protein VP39"/>
    <property type="match status" value="1"/>
</dbReference>
<dbReference type="HAMAP" id="MF_00560">
    <property type="entry name" value="Tran_acon_Me_trans"/>
    <property type="match status" value="1"/>
</dbReference>
<dbReference type="InterPro" id="IPR041698">
    <property type="entry name" value="Methyltransf_25"/>
</dbReference>
<dbReference type="InterPro" id="IPR029063">
    <property type="entry name" value="SAM-dependent_MTases_sf"/>
</dbReference>
<dbReference type="InterPro" id="IPR023506">
    <property type="entry name" value="Trans-aconitate_MeTrfase"/>
</dbReference>
<dbReference type="InterPro" id="IPR023149">
    <property type="entry name" value="Trans_acon_MeTrfase_C"/>
</dbReference>
<dbReference type="NCBIfam" id="NF002463">
    <property type="entry name" value="PRK01683.1"/>
    <property type="match status" value="1"/>
</dbReference>
<dbReference type="PANTHER" id="PTHR43861:SF1">
    <property type="entry name" value="TRANS-ACONITATE 2-METHYLTRANSFERASE"/>
    <property type="match status" value="1"/>
</dbReference>
<dbReference type="PANTHER" id="PTHR43861">
    <property type="entry name" value="TRANS-ACONITATE 2-METHYLTRANSFERASE-RELATED"/>
    <property type="match status" value="1"/>
</dbReference>
<dbReference type="Pfam" id="PF13649">
    <property type="entry name" value="Methyltransf_25"/>
    <property type="match status" value="1"/>
</dbReference>
<dbReference type="SUPFAM" id="SSF53335">
    <property type="entry name" value="S-adenosyl-L-methionine-dependent methyltransferases"/>
    <property type="match status" value="1"/>
</dbReference>
<accession>B2K7X9</accession>